<reference key="1">
    <citation type="submission" date="2008-10" db="EMBL/GenBank/DDBJ databases">
        <title>Genome sequence of Bacillus cereus B4264.</title>
        <authorList>
            <person name="Dodson R.J."/>
            <person name="Durkin A.S."/>
            <person name="Rosovitz M.J."/>
            <person name="Rasko D.A."/>
            <person name="Hoffmaster A."/>
            <person name="Ravel J."/>
            <person name="Sutton G."/>
        </authorList>
    </citation>
    <scope>NUCLEOTIDE SEQUENCE [LARGE SCALE GENOMIC DNA]</scope>
    <source>
        <strain>B4264</strain>
    </source>
</reference>
<protein>
    <recommendedName>
        <fullName evidence="1">Lipoyl synthase</fullName>
        <ecNumber evidence="1">2.8.1.8</ecNumber>
    </recommendedName>
    <alternativeName>
        <fullName evidence="1">Lip-syn</fullName>
        <shortName evidence="1">LS</shortName>
    </alternativeName>
    <alternativeName>
        <fullName evidence="1">Lipoate synthase</fullName>
    </alternativeName>
    <alternativeName>
        <fullName evidence="1">Lipoic acid synthase</fullName>
    </alternativeName>
    <alternativeName>
        <fullName evidence="1">Sulfur insertion protein LipA</fullName>
    </alternativeName>
</protein>
<proteinExistence type="inferred from homology"/>
<gene>
    <name evidence="1" type="primary">lipA</name>
    <name type="ordered locus">BCB4264_A5116</name>
</gene>
<sequence>MTKQTEYKRKPEWLKIKLNTNENYTGLKKMMRSKNLHTVCEEAKCPNIHECWAVRKTATFMILGAVCTRACRFCAVKTGLPTELDLQEPERVADSVVQMGLKHVVITAVARDDLKDGGAAVFAETVRAVRRKNPFTSIEVLPSDMGGVEENLKMLMDAKPDILNHNIETVRRLSDRVRARAKYERSLEFLRRAKEMQPDIPTKSSIMVGLGETREDLIEAMDDLRANNVDILTLGQYLQPSKKHLPVLKYYPPAEFAELKEIALSKGFSHCEAGPLVRSSYHADEQVRSAKEKTAEAK</sequence>
<dbReference type="EC" id="2.8.1.8" evidence="1"/>
<dbReference type="EMBL" id="CP001176">
    <property type="protein sequence ID" value="ACK60502.1"/>
    <property type="molecule type" value="Genomic_DNA"/>
</dbReference>
<dbReference type="RefSeq" id="WP_000166372.1">
    <property type="nucleotide sequence ID" value="NZ_VEHB01000013.1"/>
</dbReference>
<dbReference type="SMR" id="B7HCZ6"/>
<dbReference type="GeneID" id="64186273"/>
<dbReference type="KEGG" id="bcb:BCB4264_A5116"/>
<dbReference type="HOGENOM" id="CLU_033144_2_1_9"/>
<dbReference type="Proteomes" id="UP000007096">
    <property type="component" value="Chromosome"/>
</dbReference>
<dbReference type="GO" id="GO:0005737">
    <property type="term" value="C:cytoplasm"/>
    <property type="evidence" value="ECO:0007669"/>
    <property type="project" value="UniProtKB-SubCell"/>
</dbReference>
<dbReference type="GO" id="GO:0051539">
    <property type="term" value="F:4 iron, 4 sulfur cluster binding"/>
    <property type="evidence" value="ECO:0007669"/>
    <property type="project" value="UniProtKB-UniRule"/>
</dbReference>
<dbReference type="GO" id="GO:0016992">
    <property type="term" value="F:lipoate synthase activity"/>
    <property type="evidence" value="ECO:0007669"/>
    <property type="project" value="UniProtKB-UniRule"/>
</dbReference>
<dbReference type="GO" id="GO:0046872">
    <property type="term" value="F:metal ion binding"/>
    <property type="evidence" value="ECO:0007669"/>
    <property type="project" value="UniProtKB-KW"/>
</dbReference>
<dbReference type="CDD" id="cd01335">
    <property type="entry name" value="Radical_SAM"/>
    <property type="match status" value="1"/>
</dbReference>
<dbReference type="FunFam" id="3.20.20.70:FF:000040">
    <property type="entry name" value="Lipoyl synthase"/>
    <property type="match status" value="1"/>
</dbReference>
<dbReference type="Gene3D" id="3.20.20.70">
    <property type="entry name" value="Aldolase class I"/>
    <property type="match status" value="1"/>
</dbReference>
<dbReference type="HAMAP" id="MF_00206">
    <property type="entry name" value="Lipoyl_synth"/>
    <property type="match status" value="1"/>
</dbReference>
<dbReference type="InterPro" id="IPR013785">
    <property type="entry name" value="Aldolase_TIM"/>
</dbReference>
<dbReference type="InterPro" id="IPR006638">
    <property type="entry name" value="Elp3/MiaA/NifB-like_rSAM"/>
</dbReference>
<dbReference type="InterPro" id="IPR031691">
    <property type="entry name" value="LIAS_N"/>
</dbReference>
<dbReference type="InterPro" id="IPR003698">
    <property type="entry name" value="Lipoyl_synth"/>
</dbReference>
<dbReference type="InterPro" id="IPR007197">
    <property type="entry name" value="rSAM"/>
</dbReference>
<dbReference type="NCBIfam" id="TIGR00510">
    <property type="entry name" value="lipA"/>
    <property type="match status" value="1"/>
</dbReference>
<dbReference type="NCBIfam" id="NF004019">
    <property type="entry name" value="PRK05481.1"/>
    <property type="match status" value="1"/>
</dbReference>
<dbReference type="NCBIfam" id="NF009544">
    <property type="entry name" value="PRK12928.1"/>
    <property type="match status" value="1"/>
</dbReference>
<dbReference type="PANTHER" id="PTHR10949">
    <property type="entry name" value="LIPOYL SYNTHASE"/>
    <property type="match status" value="1"/>
</dbReference>
<dbReference type="PANTHER" id="PTHR10949:SF0">
    <property type="entry name" value="LIPOYL SYNTHASE, MITOCHONDRIAL"/>
    <property type="match status" value="1"/>
</dbReference>
<dbReference type="Pfam" id="PF16881">
    <property type="entry name" value="LIAS_N"/>
    <property type="match status" value="1"/>
</dbReference>
<dbReference type="Pfam" id="PF04055">
    <property type="entry name" value="Radical_SAM"/>
    <property type="match status" value="1"/>
</dbReference>
<dbReference type="PIRSF" id="PIRSF005963">
    <property type="entry name" value="Lipoyl_synth"/>
    <property type="match status" value="1"/>
</dbReference>
<dbReference type="SFLD" id="SFLDF00271">
    <property type="entry name" value="lipoyl_synthase"/>
    <property type="match status" value="1"/>
</dbReference>
<dbReference type="SFLD" id="SFLDS00029">
    <property type="entry name" value="Radical_SAM"/>
    <property type="match status" value="1"/>
</dbReference>
<dbReference type="SMART" id="SM00729">
    <property type="entry name" value="Elp3"/>
    <property type="match status" value="1"/>
</dbReference>
<dbReference type="SUPFAM" id="SSF102114">
    <property type="entry name" value="Radical SAM enzymes"/>
    <property type="match status" value="1"/>
</dbReference>
<dbReference type="PROSITE" id="PS51918">
    <property type="entry name" value="RADICAL_SAM"/>
    <property type="match status" value="1"/>
</dbReference>
<keyword id="KW-0004">4Fe-4S</keyword>
<keyword id="KW-0963">Cytoplasm</keyword>
<keyword id="KW-0408">Iron</keyword>
<keyword id="KW-0411">Iron-sulfur</keyword>
<keyword id="KW-0479">Metal-binding</keyword>
<keyword id="KW-0949">S-adenosyl-L-methionine</keyword>
<keyword id="KW-0808">Transferase</keyword>
<name>LIPA_BACC4</name>
<evidence type="ECO:0000255" key="1">
    <source>
        <dbReference type="HAMAP-Rule" id="MF_00206"/>
    </source>
</evidence>
<evidence type="ECO:0000255" key="2">
    <source>
        <dbReference type="PROSITE-ProRule" id="PRU01266"/>
    </source>
</evidence>
<feature type="chain" id="PRO_1000191446" description="Lipoyl synthase">
    <location>
        <begin position="1"/>
        <end position="298"/>
    </location>
</feature>
<feature type="domain" description="Radical SAM core" evidence="2">
    <location>
        <begin position="53"/>
        <end position="269"/>
    </location>
</feature>
<feature type="binding site" evidence="1">
    <location>
        <position position="40"/>
    </location>
    <ligand>
        <name>[4Fe-4S] cluster</name>
        <dbReference type="ChEBI" id="CHEBI:49883"/>
        <label>1</label>
    </ligand>
</feature>
<feature type="binding site" evidence="1">
    <location>
        <position position="45"/>
    </location>
    <ligand>
        <name>[4Fe-4S] cluster</name>
        <dbReference type="ChEBI" id="CHEBI:49883"/>
        <label>1</label>
    </ligand>
</feature>
<feature type="binding site" evidence="1">
    <location>
        <position position="51"/>
    </location>
    <ligand>
        <name>[4Fe-4S] cluster</name>
        <dbReference type="ChEBI" id="CHEBI:49883"/>
        <label>1</label>
    </ligand>
</feature>
<feature type="binding site" evidence="1">
    <location>
        <position position="67"/>
    </location>
    <ligand>
        <name>[4Fe-4S] cluster</name>
        <dbReference type="ChEBI" id="CHEBI:49883"/>
        <label>2</label>
        <note>4Fe-4S-S-AdoMet</note>
    </ligand>
</feature>
<feature type="binding site" evidence="1">
    <location>
        <position position="71"/>
    </location>
    <ligand>
        <name>[4Fe-4S] cluster</name>
        <dbReference type="ChEBI" id="CHEBI:49883"/>
        <label>2</label>
        <note>4Fe-4S-S-AdoMet</note>
    </ligand>
</feature>
<feature type="binding site" evidence="1">
    <location>
        <position position="74"/>
    </location>
    <ligand>
        <name>[4Fe-4S] cluster</name>
        <dbReference type="ChEBI" id="CHEBI:49883"/>
        <label>2</label>
        <note>4Fe-4S-S-AdoMet</note>
    </ligand>
</feature>
<feature type="binding site" evidence="1">
    <location>
        <position position="280"/>
    </location>
    <ligand>
        <name>[4Fe-4S] cluster</name>
        <dbReference type="ChEBI" id="CHEBI:49883"/>
        <label>1</label>
    </ligand>
</feature>
<comment type="function">
    <text evidence="1">Catalyzes the radical-mediated insertion of two sulfur atoms into the C-6 and C-8 positions of the octanoyl moiety bound to the lipoyl domains of lipoate-dependent enzymes, thereby converting the octanoylated domains into lipoylated derivatives.</text>
</comment>
<comment type="catalytic activity">
    <reaction evidence="1">
        <text>[[Fe-S] cluster scaffold protein carrying a second [4Fe-4S](2+) cluster] + N(6)-octanoyl-L-lysyl-[protein] + 2 oxidized [2Fe-2S]-[ferredoxin] + 2 S-adenosyl-L-methionine + 4 H(+) = [[Fe-S] cluster scaffold protein] + N(6)-[(R)-dihydrolipoyl]-L-lysyl-[protein] + 4 Fe(3+) + 2 hydrogen sulfide + 2 5'-deoxyadenosine + 2 L-methionine + 2 reduced [2Fe-2S]-[ferredoxin]</text>
        <dbReference type="Rhea" id="RHEA:16585"/>
        <dbReference type="Rhea" id="RHEA-COMP:9928"/>
        <dbReference type="Rhea" id="RHEA-COMP:10000"/>
        <dbReference type="Rhea" id="RHEA-COMP:10001"/>
        <dbReference type="Rhea" id="RHEA-COMP:10475"/>
        <dbReference type="Rhea" id="RHEA-COMP:14568"/>
        <dbReference type="Rhea" id="RHEA-COMP:14569"/>
        <dbReference type="ChEBI" id="CHEBI:15378"/>
        <dbReference type="ChEBI" id="CHEBI:17319"/>
        <dbReference type="ChEBI" id="CHEBI:29034"/>
        <dbReference type="ChEBI" id="CHEBI:29919"/>
        <dbReference type="ChEBI" id="CHEBI:33722"/>
        <dbReference type="ChEBI" id="CHEBI:33737"/>
        <dbReference type="ChEBI" id="CHEBI:33738"/>
        <dbReference type="ChEBI" id="CHEBI:57844"/>
        <dbReference type="ChEBI" id="CHEBI:59789"/>
        <dbReference type="ChEBI" id="CHEBI:78809"/>
        <dbReference type="ChEBI" id="CHEBI:83100"/>
        <dbReference type="EC" id="2.8.1.8"/>
    </reaction>
</comment>
<comment type="cofactor">
    <cofactor evidence="1">
        <name>[4Fe-4S] cluster</name>
        <dbReference type="ChEBI" id="CHEBI:49883"/>
    </cofactor>
    <text evidence="1">Binds 2 [4Fe-4S] clusters per subunit. One cluster is coordinated with 3 cysteines and an exchangeable S-adenosyl-L-methionine.</text>
</comment>
<comment type="pathway">
    <text evidence="1">Protein modification; protein lipoylation via endogenous pathway; protein N(6)-(lipoyl)lysine from octanoyl-[acyl-carrier-protein].</text>
</comment>
<comment type="subcellular location">
    <subcellularLocation>
        <location evidence="1">Cytoplasm</location>
    </subcellularLocation>
</comment>
<comment type="similarity">
    <text evidence="1">Belongs to the radical SAM superfamily. Lipoyl synthase family.</text>
</comment>
<accession>B7HCZ6</accession>
<organism>
    <name type="scientific">Bacillus cereus (strain B4264)</name>
    <dbReference type="NCBI Taxonomy" id="405532"/>
    <lineage>
        <taxon>Bacteria</taxon>
        <taxon>Bacillati</taxon>
        <taxon>Bacillota</taxon>
        <taxon>Bacilli</taxon>
        <taxon>Bacillales</taxon>
        <taxon>Bacillaceae</taxon>
        <taxon>Bacillus</taxon>
        <taxon>Bacillus cereus group</taxon>
    </lineage>
</organism>